<sequence length="230" mass="25020">MQKIGILGAMREEITPILELFGVDFEEIPLGGNVFHKGVYHNKEIIVAYSKIGKVHSTLTTTSMILAFGVQKVLFSGVAGSLVKDLKINDLLVATQLVQHDVDLSAFDHPLGFIPESAIFIETSGSLNALAKKIANEQHIALKEGVIASGDQFVHSKERKEFLVSEFKASAVEMEGASVAFVCQKFGVPCCVLRSISDNADEKAGMSFDEFLEKSAHTSAKFLKSMVDEL</sequence>
<dbReference type="EC" id="3.2.2.30" evidence="2 3"/>
<dbReference type="EC" id="3.2.2.9" evidence="2 3"/>
<dbReference type="EMBL" id="AE001439">
    <property type="protein sequence ID" value="AAD05666.1"/>
    <property type="molecule type" value="Genomic_DNA"/>
</dbReference>
<dbReference type="PIR" id="E71976">
    <property type="entry name" value="E71976"/>
</dbReference>
<dbReference type="PDB" id="3NM4">
    <property type="method" value="X-ray"/>
    <property type="resolution" value="1.70 A"/>
    <property type="chains" value="A/B=1-230"/>
</dbReference>
<dbReference type="PDB" id="3NM5">
    <property type="method" value="X-ray"/>
    <property type="resolution" value="1.80 A"/>
    <property type="chains" value="A/B=1-230"/>
</dbReference>
<dbReference type="PDB" id="3NM6">
    <property type="method" value="X-ray"/>
    <property type="resolution" value="1.60 A"/>
    <property type="chains" value="B=1-230"/>
</dbReference>
<dbReference type="PDB" id="4FFS">
    <property type="method" value="X-ray"/>
    <property type="resolution" value="1.90 A"/>
    <property type="chains" value="A=1-230"/>
</dbReference>
<dbReference type="PDB" id="4OJT">
    <property type="method" value="X-ray"/>
    <property type="resolution" value="1.50 A"/>
    <property type="chains" value="A=2-230"/>
</dbReference>
<dbReference type="PDB" id="4OY3">
    <property type="method" value="X-ray"/>
    <property type="resolution" value="1.20 A"/>
    <property type="chains" value="A=2-230"/>
</dbReference>
<dbReference type="PDB" id="4P54">
    <property type="method" value="X-ray"/>
    <property type="resolution" value="1.65 A"/>
    <property type="chains" value="A=2-230"/>
</dbReference>
<dbReference type="PDB" id="4WKN">
    <property type="method" value="X-ray"/>
    <property type="resolution" value="2.00 A"/>
    <property type="chains" value="A=2-230"/>
</dbReference>
<dbReference type="PDB" id="4WKO">
    <property type="method" value="X-ray"/>
    <property type="resolution" value="1.90 A"/>
    <property type="chains" value="A=2-230"/>
</dbReference>
<dbReference type="PDB" id="4WKP">
    <property type="method" value="X-ray"/>
    <property type="resolution" value="1.58 A"/>
    <property type="chains" value="A/B/C/D=2-230"/>
</dbReference>
<dbReference type="PDB" id="4YNB">
    <property type="method" value="X-ray"/>
    <property type="resolution" value="2.00 A"/>
    <property type="chains" value="A=2-230"/>
</dbReference>
<dbReference type="PDB" id="4YO8">
    <property type="method" value="X-ray"/>
    <property type="resolution" value="2.10 A"/>
    <property type="chains" value="A/B=2-230"/>
</dbReference>
<dbReference type="PDB" id="5CCD">
    <property type="method" value="Other"/>
    <property type="resolution" value="2.20 A"/>
    <property type="chains" value="A=2-230"/>
</dbReference>
<dbReference type="PDB" id="5CCE">
    <property type="method" value="Other"/>
    <property type="resolution" value="2.50 A"/>
    <property type="chains" value="A=2-230"/>
</dbReference>
<dbReference type="PDB" id="5JPC">
    <property type="method" value="Other"/>
    <property type="resolution" value="2.50 A"/>
    <property type="chains" value="A=2-230"/>
</dbReference>
<dbReference type="PDB" id="5K1Z">
    <property type="method" value="Other"/>
    <property type="resolution" value="2.60 A"/>
    <property type="chains" value="A=2-230"/>
</dbReference>
<dbReference type="PDB" id="5KB3">
    <property type="method" value="X-ray"/>
    <property type="resolution" value="1.40 A"/>
    <property type="chains" value="A=2-230"/>
</dbReference>
<dbReference type="PDB" id="6DYU">
    <property type="method" value="X-ray"/>
    <property type="resolution" value="1.60 A"/>
    <property type="chains" value="A/B=1-230"/>
</dbReference>
<dbReference type="PDB" id="6DYV">
    <property type="method" value="X-ray"/>
    <property type="resolution" value="1.62 A"/>
    <property type="chains" value="A/B=1-230"/>
</dbReference>
<dbReference type="PDB" id="6DYW">
    <property type="method" value="X-ray"/>
    <property type="resolution" value="1.45 A"/>
    <property type="chains" value="A/B=1-230"/>
</dbReference>
<dbReference type="PDB" id="6DYY">
    <property type="method" value="X-ray"/>
    <property type="resolution" value="1.61 A"/>
    <property type="chains" value="A/B/C/D=1-230"/>
</dbReference>
<dbReference type="PDBsum" id="3NM4"/>
<dbReference type="PDBsum" id="3NM5"/>
<dbReference type="PDBsum" id="3NM6"/>
<dbReference type="PDBsum" id="4FFS"/>
<dbReference type="PDBsum" id="4OJT"/>
<dbReference type="PDBsum" id="4OY3"/>
<dbReference type="PDBsum" id="4P54"/>
<dbReference type="PDBsum" id="4WKN"/>
<dbReference type="PDBsum" id="4WKO"/>
<dbReference type="PDBsum" id="4WKP"/>
<dbReference type="PDBsum" id="4YNB"/>
<dbReference type="PDBsum" id="4YO8"/>
<dbReference type="PDBsum" id="5CCD"/>
<dbReference type="PDBsum" id="5CCE"/>
<dbReference type="PDBsum" id="5JPC"/>
<dbReference type="PDBsum" id="5K1Z"/>
<dbReference type="PDBsum" id="5KB3"/>
<dbReference type="PDBsum" id="6DYU"/>
<dbReference type="PDBsum" id="6DYV"/>
<dbReference type="PDBsum" id="6DYW"/>
<dbReference type="PDBsum" id="6DYY"/>
<dbReference type="SMR" id="Q9ZMY2"/>
<dbReference type="BindingDB" id="Q9ZMY2"/>
<dbReference type="ChEMBL" id="CHEMBL5291527"/>
<dbReference type="KEGG" id="hpj:jhp_0082"/>
<dbReference type="eggNOG" id="COG0775">
    <property type="taxonomic scope" value="Bacteria"/>
</dbReference>
<dbReference type="BRENDA" id="3.2.2.16">
    <property type="organism ID" value="2604"/>
</dbReference>
<dbReference type="BRENDA" id="3.2.2.30">
    <property type="organism ID" value="2604"/>
</dbReference>
<dbReference type="BRENDA" id="3.2.2.9">
    <property type="organism ID" value="2604"/>
</dbReference>
<dbReference type="UniPathway" id="UPA00079"/>
<dbReference type="UniPathway" id="UPA00904">
    <property type="reaction ID" value="UER00871"/>
</dbReference>
<dbReference type="EvolutionaryTrace" id="Q9ZMY2"/>
<dbReference type="PRO" id="PR:Q9ZMY2"/>
<dbReference type="Proteomes" id="UP000000804">
    <property type="component" value="Chromosome"/>
</dbReference>
<dbReference type="GO" id="GO:0005829">
    <property type="term" value="C:cytosol"/>
    <property type="evidence" value="ECO:0007669"/>
    <property type="project" value="TreeGrafter"/>
</dbReference>
<dbReference type="GO" id="GO:0102246">
    <property type="term" value="F:6-amino-6-deoxyfutalosine hydrolase activity"/>
    <property type="evidence" value="ECO:0007669"/>
    <property type="project" value="UniProtKB-EC"/>
</dbReference>
<dbReference type="GO" id="GO:0008782">
    <property type="term" value="F:adenosylhomocysteine nucleosidase activity"/>
    <property type="evidence" value="ECO:0007669"/>
    <property type="project" value="UniProtKB-EC"/>
</dbReference>
<dbReference type="GO" id="GO:0008930">
    <property type="term" value="F:methylthioadenosine nucleosidase activity"/>
    <property type="evidence" value="ECO:0007669"/>
    <property type="project" value="InterPro"/>
</dbReference>
<dbReference type="GO" id="GO:0019509">
    <property type="term" value="P:L-methionine salvage from methylthioadenosine"/>
    <property type="evidence" value="ECO:0007669"/>
    <property type="project" value="UniProtKB-UniPathway"/>
</dbReference>
<dbReference type="GO" id="GO:0019284">
    <property type="term" value="P:L-methionine salvage from S-adenosylmethionine"/>
    <property type="evidence" value="ECO:0007669"/>
    <property type="project" value="TreeGrafter"/>
</dbReference>
<dbReference type="GO" id="GO:0009234">
    <property type="term" value="P:menaquinone biosynthetic process"/>
    <property type="evidence" value="ECO:0007669"/>
    <property type="project" value="UniProtKB-UniPathway"/>
</dbReference>
<dbReference type="GO" id="GO:0009164">
    <property type="term" value="P:nucleoside catabolic process"/>
    <property type="evidence" value="ECO:0007669"/>
    <property type="project" value="InterPro"/>
</dbReference>
<dbReference type="CDD" id="cd09008">
    <property type="entry name" value="MTAN"/>
    <property type="match status" value="1"/>
</dbReference>
<dbReference type="FunFam" id="3.40.50.1580:FF:000026">
    <property type="entry name" value="Aminodeoxyfutalosine nucleosidase"/>
    <property type="match status" value="1"/>
</dbReference>
<dbReference type="Gene3D" id="3.40.50.1580">
    <property type="entry name" value="Nucleoside phosphorylase domain"/>
    <property type="match status" value="1"/>
</dbReference>
<dbReference type="InterPro" id="IPR010049">
    <property type="entry name" value="MTA_SAH_Nsdase"/>
</dbReference>
<dbReference type="InterPro" id="IPR000845">
    <property type="entry name" value="Nucleoside_phosphorylase_d"/>
</dbReference>
<dbReference type="InterPro" id="IPR035994">
    <property type="entry name" value="Nucleoside_phosphorylase_sf"/>
</dbReference>
<dbReference type="NCBIfam" id="TIGR01704">
    <property type="entry name" value="MTA_SAH-Nsdase"/>
    <property type="match status" value="1"/>
</dbReference>
<dbReference type="NCBIfam" id="NF004079">
    <property type="entry name" value="PRK05584.1"/>
    <property type="match status" value="1"/>
</dbReference>
<dbReference type="PANTHER" id="PTHR46832">
    <property type="entry name" value="5'-METHYLTHIOADENOSINE/S-ADENOSYLHOMOCYSTEINE NUCLEOSIDASE"/>
    <property type="match status" value="1"/>
</dbReference>
<dbReference type="PANTHER" id="PTHR46832:SF1">
    <property type="entry name" value="5'-METHYLTHIOADENOSINE_S-ADENOSYLHOMOCYSTEINE NUCLEOSIDASE"/>
    <property type="match status" value="1"/>
</dbReference>
<dbReference type="Pfam" id="PF01048">
    <property type="entry name" value="PNP_UDP_1"/>
    <property type="match status" value="1"/>
</dbReference>
<dbReference type="SUPFAM" id="SSF53167">
    <property type="entry name" value="Purine and uridine phosphorylases"/>
    <property type="match status" value="1"/>
</dbReference>
<keyword id="KW-0002">3D-structure</keyword>
<keyword id="KW-0028">Amino-acid biosynthesis</keyword>
<keyword id="KW-0378">Hydrolase</keyword>
<keyword id="KW-0474">Menaquinone biosynthesis</keyword>
<keyword id="KW-0486">Methionine biosynthesis</keyword>
<comment type="function">
    <text evidence="2 3">Catalyzes the direct conversion of aminodeoxyfutalosine (AFL) into dehypoxanthine futalosine (DHFL) and adenine via the hydrolysis of the N-glycosidic bond; this reaction seems to represent an essential step in the menaquinone biosynthesis pathway in Helicobacter species. Also catalyzes the hydrolysis of 5'-methylthioadenosine (MTA) to adenine and 5'-methylthioribose. Can also probably use S-adenosylhomocysteine (SAH) as substrate, leading to adenine and S-ribosylhomocysteine. These other activities highlight the tremendous versatility of the enzyme, which also plays key roles in S-adenosylmethionine recycling and in the biosynthesis of the quorum-sensing molecule autoinducer-2.</text>
</comment>
<comment type="catalytic activity">
    <reaction evidence="2 3">
        <text>6-amino-6-deoxyfutalosine + H2O = dehypoxanthine futalosine + adenine</text>
        <dbReference type="Rhea" id="RHEA:33079"/>
        <dbReference type="ChEBI" id="CHEBI:15377"/>
        <dbReference type="ChEBI" id="CHEBI:16708"/>
        <dbReference type="ChEBI" id="CHEBI:58864"/>
        <dbReference type="ChEBI" id="CHEBI:64286"/>
        <dbReference type="EC" id="3.2.2.30"/>
    </reaction>
</comment>
<comment type="catalytic activity">
    <reaction evidence="2 3">
        <text>S-adenosyl-L-homocysteine + H2O = S-(5-deoxy-D-ribos-5-yl)-L-homocysteine + adenine</text>
        <dbReference type="Rhea" id="RHEA:17805"/>
        <dbReference type="ChEBI" id="CHEBI:15377"/>
        <dbReference type="ChEBI" id="CHEBI:16708"/>
        <dbReference type="ChEBI" id="CHEBI:57856"/>
        <dbReference type="ChEBI" id="CHEBI:58195"/>
        <dbReference type="EC" id="3.2.2.9"/>
    </reaction>
</comment>
<comment type="catalytic activity">
    <reaction evidence="2 3">
        <text>S-methyl-5'-thioadenosine + H2O = 5-(methylsulfanyl)-D-ribose + adenine</text>
        <dbReference type="Rhea" id="RHEA:13617"/>
        <dbReference type="ChEBI" id="CHEBI:15377"/>
        <dbReference type="ChEBI" id="CHEBI:16708"/>
        <dbReference type="ChEBI" id="CHEBI:17509"/>
        <dbReference type="ChEBI" id="CHEBI:78440"/>
        <dbReference type="EC" id="3.2.2.9"/>
    </reaction>
</comment>
<comment type="catalytic activity">
    <reaction evidence="2 3">
        <text>5'-deoxyadenosine + H2O = 5-deoxy-D-ribose + adenine</text>
        <dbReference type="Rhea" id="RHEA:29859"/>
        <dbReference type="ChEBI" id="CHEBI:15377"/>
        <dbReference type="ChEBI" id="CHEBI:16708"/>
        <dbReference type="ChEBI" id="CHEBI:17319"/>
        <dbReference type="ChEBI" id="CHEBI:149540"/>
        <dbReference type="EC" id="3.2.2.9"/>
    </reaction>
</comment>
<comment type="activity regulation">
    <text evidence="3">Is inhibited by the transition state analog BuT-DADMe-ImmA. This compound is also able to inhibit H.pylori growth and is more efficient than antibiotics commonly used in ulcer therapy.</text>
</comment>
<comment type="biophysicochemical properties">
    <kinetics>
        <KM evidence="2 3">0.6 uM for 5'-methylthioadenosine</KM>
        <KM evidence="2 3">0.8 uM for aminodeoxyfutalosine</KM>
        <KM evidence="2 3">44.9 uM for 5'-methylthioadenosine (at pH 7.5 and 37 degrees Celsius)</KM>
        <text evidence="2 3">kcat is 12.1 sec(-1) with 5'-methylthioadenosine as substrate, and 4.3 sec(-1) with aminodeoxyfutalosine as substrate (PubMed:22891633). kcat is 4.92 sec(-1) with 5'-methylthioadenosine as substrate (at pH 7.5 and 37 degrees Celsius) (PubMed:20954236).</text>
    </kinetics>
</comment>
<comment type="pathway">
    <text>Quinol/quinone metabolism; menaquinone biosynthesis.</text>
</comment>
<comment type="pathway">
    <text>Amino-acid biosynthesis; L-methionine biosynthesis via salvage pathway; S-methyl-5-thio-alpha-D-ribose 1-phosphate from S-methyl-5'-thioadenosine (hydrolase route): step 1/2.</text>
</comment>
<comment type="subunit">
    <text evidence="2 3">Homodimer.</text>
</comment>
<comment type="similarity">
    <text evidence="4">Belongs to the PNP/UDP phosphorylase family. MtnN subfamily.</text>
</comment>
<evidence type="ECO:0000250" key="1"/>
<evidence type="ECO:0000269" key="2">
    <source>
    </source>
</evidence>
<evidence type="ECO:0000269" key="3">
    <source>
    </source>
</evidence>
<evidence type="ECO:0000305" key="4"/>
<evidence type="ECO:0000305" key="5">
    <source>
    </source>
</evidence>
<evidence type="ECO:0007829" key="6">
    <source>
        <dbReference type="PDB" id="4OY3"/>
    </source>
</evidence>
<evidence type="ECO:0007829" key="7">
    <source>
        <dbReference type="PDB" id="4WKP"/>
    </source>
</evidence>
<name>MQMTN_HELPJ</name>
<accession>Q9ZMY2</accession>
<protein>
    <recommendedName>
        <fullName>Aminodeoxyfutalosine nucleosidase</fullName>
        <shortName>AFL nucleosidase</shortName>
        <shortName>Aminofutalosine nucleosidase</shortName>
        <ecNumber evidence="2 3">3.2.2.30</ecNumber>
    </recommendedName>
    <alternativeName>
        <fullName>5'-methylthioadenosine/S-adenosylhomocysteine nucleosidase</fullName>
        <shortName>MTA/SAH nucleosidase</shortName>
        <shortName>MTAN</shortName>
        <ecNumber evidence="2 3">3.2.2.9</ecNumber>
    </alternativeName>
    <alternativeName>
        <fullName>6-amino-6-deoxyfutalosine N-ribosylhydrolase</fullName>
    </alternativeName>
</protein>
<feature type="chain" id="PRO_0000164444" description="Aminodeoxyfutalosine nucleosidase">
    <location>
        <begin position="1"/>
        <end position="230"/>
    </location>
</feature>
<feature type="active site" description="Proton acceptor" evidence="5">
    <location>
        <position position="13"/>
    </location>
</feature>
<feature type="active site" description="Proton donor" evidence="5">
    <location>
        <position position="198"/>
    </location>
</feature>
<feature type="binding site" evidence="1">
    <location>
        <position position="80"/>
    </location>
    <ligand>
        <name>substrate</name>
    </ligand>
</feature>
<feature type="binding site">
    <location>
        <position position="154"/>
    </location>
    <ligand>
        <name>substrate</name>
    </ligand>
</feature>
<feature type="binding site">
    <location>
        <begin position="174"/>
        <end position="175"/>
    </location>
    <ligand>
        <name>substrate</name>
    </ligand>
</feature>
<feature type="strand" evidence="6">
    <location>
        <begin position="4"/>
        <end position="10"/>
    </location>
</feature>
<feature type="helix" evidence="6">
    <location>
        <begin position="11"/>
        <end position="21"/>
    </location>
</feature>
<feature type="strand" evidence="6">
    <location>
        <begin position="26"/>
        <end position="30"/>
    </location>
</feature>
<feature type="strand" evidence="6">
    <location>
        <begin position="33"/>
        <end position="40"/>
    </location>
</feature>
<feature type="strand" evidence="6">
    <location>
        <begin position="43"/>
        <end position="49"/>
    </location>
</feature>
<feature type="helix" evidence="6">
    <location>
        <begin position="54"/>
        <end position="68"/>
    </location>
</feature>
<feature type="strand" evidence="6">
    <location>
        <begin position="71"/>
        <end position="81"/>
    </location>
</feature>
<feature type="strand" evidence="6">
    <location>
        <begin position="91"/>
        <end position="99"/>
    </location>
</feature>
<feature type="helix" evidence="6">
    <location>
        <begin position="105"/>
        <end position="107"/>
    </location>
</feature>
<feature type="strand" evidence="7">
    <location>
        <begin position="119"/>
        <end position="122"/>
    </location>
</feature>
<feature type="helix" evidence="6">
    <location>
        <begin position="125"/>
        <end position="138"/>
    </location>
</feature>
<feature type="strand" evidence="6">
    <location>
        <begin position="143"/>
        <end position="149"/>
    </location>
</feature>
<feature type="helix" evidence="6">
    <location>
        <begin position="157"/>
        <end position="167"/>
    </location>
</feature>
<feature type="strand" evidence="6">
    <location>
        <begin position="169"/>
        <end position="175"/>
    </location>
</feature>
<feature type="helix" evidence="6">
    <location>
        <begin position="176"/>
        <end position="186"/>
    </location>
</feature>
<feature type="strand" evidence="6">
    <location>
        <begin position="190"/>
        <end position="198"/>
    </location>
</feature>
<feature type="helix" evidence="6">
    <location>
        <begin position="204"/>
        <end position="227"/>
    </location>
</feature>
<reference key="1">
    <citation type="journal article" date="1999" name="Nature">
        <title>Genomic sequence comparison of two unrelated isolates of the human gastric pathogen Helicobacter pylori.</title>
        <authorList>
            <person name="Alm R.A."/>
            <person name="Ling L.-S.L."/>
            <person name="Moir D.T."/>
            <person name="King B.L."/>
            <person name="Brown E.D."/>
            <person name="Doig P.C."/>
            <person name="Smith D.R."/>
            <person name="Noonan B."/>
            <person name="Guild B.C."/>
            <person name="deJonge B.L."/>
            <person name="Carmel G."/>
            <person name="Tummino P.J."/>
            <person name="Caruso A."/>
            <person name="Uria-Nickelsen M."/>
            <person name="Mills D.M."/>
            <person name="Ives C."/>
            <person name="Gibson R."/>
            <person name="Merberg D."/>
            <person name="Mills S.D."/>
            <person name="Jiang Q."/>
            <person name="Taylor D.E."/>
            <person name="Vovis G.F."/>
            <person name="Trust T.J."/>
        </authorList>
    </citation>
    <scope>NUCLEOTIDE SEQUENCE [LARGE SCALE GENOMIC DNA]</scope>
    <source>
        <strain>J99 / ATCC 700824</strain>
    </source>
</reference>
<reference key="2">
    <citation type="journal article" date="2010" name="Protein Sci.">
        <title>Enzyme-ligand interactions that drive active site rearrangements in the Helicobacter pylori 5'-methylthioadenosine/S-adenosylhomocysteine nucleosidase.</title>
        <authorList>
            <person name="Ronning D.R."/>
            <person name="Iacopelli N.M."/>
            <person name="Mishra V."/>
        </authorList>
    </citation>
    <scope>X-RAY CRYSTALLOGRAPHY (1.6 ANGSTROMS) OF APOENZYME AND COMPLEXES WITH ADENINE AND THE NONHYDROLYZABLE TRANSITION STATE ANALOG FORMYCIN A</scope>
    <scope>FUNCTION AS MTA NUCLEOSIDASE</scope>
    <scope>CATALYTIC ACTIVITY</scope>
    <scope>KINETIC PARAMETERS</scope>
    <scope>REACTION MECHANISM</scope>
    <scope>ACTIVE SITES</scope>
    <scope>SUBUNIT</scope>
    <source>
        <strain>J99 / ATCC 700824</strain>
    </source>
</reference>
<reference key="3">
    <citation type="journal article" date="2012" name="Biochemistry">
        <title>A picomolar transition state analogue inhibitor of MTAN as a specific antibiotic for Helicobacter pylori.</title>
        <authorList>
            <person name="Wang S."/>
            <person name="Haapalainen A.M."/>
            <person name="Yan F."/>
            <person name="Du Q."/>
            <person name="Tyler P.C."/>
            <person name="Evans G.B."/>
            <person name="Rinaldo-Matthis A."/>
            <person name="Brown R.L."/>
            <person name="Norris G.E."/>
            <person name="Almo S.C."/>
            <person name="Schramm V.L."/>
        </authorList>
    </citation>
    <scope>X-RAY CRYSTALLOGRAPHY (1.90 ANGSTROMS) IN COMPLEX WITH A TRANSITION STATE ANALOG INHIBITOR</scope>
    <scope>FUNCTION AS MTA AND AFL NUCLEOSIDASE</scope>
    <scope>CATALYTIC ACTIVITY</scope>
    <scope>KINETIC PARAMETERS</scope>
    <scope>ACTIVITY REGULATION</scope>
    <scope>MENAQUINONE BIOSYNTHESIS PATHWAY</scope>
    <source>
        <strain>J99 / ATCC 700824</strain>
    </source>
</reference>
<gene>
    <name type="primary">mtnN</name>
    <name type="synonym">mtn</name>
    <name type="ordered locus">jhp_0082</name>
</gene>
<organism>
    <name type="scientific">Helicobacter pylori (strain J99 / ATCC 700824)</name>
    <name type="common">Campylobacter pylori J99</name>
    <dbReference type="NCBI Taxonomy" id="85963"/>
    <lineage>
        <taxon>Bacteria</taxon>
        <taxon>Pseudomonadati</taxon>
        <taxon>Campylobacterota</taxon>
        <taxon>Epsilonproteobacteria</taxon>
        <taxon>Campylobacterales</taxon>
        <taxon>Helicobacteraceae</taxon>
        <taxon>Helicobacter</taxon>
    </lineage>
</organism>
<proteinExistence type="evidence at protein level"/>